<evidence type="ECO:0000255" key="1">
    <source>
        <dbReference type="HAMAP-Rule" id="MF_01864"/>
    </source>
</evidence>
<evidence type="ECO:0000255" key="2">
    <source>
        <dbReference type="PROSITE-ProRule" id="PRU01266"/>
    </source>
</evidence>
<comment type="function">
    <text evidence="1">Catalyzes the methylthiolation of N6-(dimethylallyl)adenosine (i(6)A), leading to the formation of 2-methylthio-N6-(dimethylallyl)adenosine (ms(2)i(6)A) at position 37 in tRNAs that read codons beginning with uridine.</text>
</comment>
<comment type="catalytic activity">
    <reaction evidence="1">
        <text>N(6)-dimethylallyladenosine(37) in tRNA + (sulfur carrier)-SH + AH2 + 2 S-adenosyl-L-methionine = 2-methylsulfanyl-N(6)-dimethylallyladenosine(37) in tRNA + (sulfur carrier)-H + 5'-deoxyadenosine + L-methionine + A + S-adenosyl-L-homocysteine + 2 H(+)</text>
        <dbReference type="Rhea" id="RHEA:37067"/>
        <dbReference type="Rhea" id="RHEA-COMP:10375"/>
        <dbReference type="Rhea" id="RHEA-COMP:10376"/>
        <dbReference type="Rhea" id="RHEA-COMP:14737"/>
        <dbReference type="Rhea" id="RHEA-COMP:14739"/>
        <dbReference type="ChEBI" id="CHEBI:13193"/>
        <dbReference type="ChEBI" id="CHEBI:15378"/>
        <dbReference type="ChEBI" id="CHEBI:17319"/>
        <dbReference type="ChEBI" id="CHEBI:17499"/>
        <dbReference type="ChEBI" id="CHEBI:29917"/>
        <dbReference type="ChEBI" id="CHEBI:57844"/>
        <dbReference type="ChEBI" id="CHEBI:57856"/>
        <dbReference type="ChEBI" id="CHEBI:59789"/>
        <dbReference type="ChEBI" id="CHEBI:64428"/>
        <dbReference type="ChEBI" id="CHEBI:74415"/>
        <dbReference type="ChEBI" id="CHEBI:74417"/>
        <dbReference type="EC" id="2.8.4.3"/>
    </reaction>
</comment>
<comment type="cofactor">
    <cofactor evidence="1">
        <name>[4Fe-4S] cluster</name>
        <dbReference type="ChEBI" id="CHEBI:49883"/>
    </cofactor>
    <text evidence="1">Binds 2 [4Fe-4S] clusters. One cluster is coordinated with 3 cysteines and an exchangeable S-adenosyl-L-methionine.</text>
</comment>
<comment type="subunit">
    <text evidence="1">Monomer.</text>
</comment>
<comment type="subcellular location">
    <subcellularLocation>
        <location evidence="1">Cytoplasm</location>
    </subcellularLocation>
</comment>
<comment type="similarity">
    <text evidence="1">Belongs to the methylthiotransferase family. MiaB subfamily.</text>
</comment>
<keyword id="KW-0004">4Fe-4S</keyword>
<keyword id="KW-0963">Cytoplasm</keyword>
<keyword id="KW-0408">Iron</keyword>
<keyword id="KW-0411">Iron-sulfur</keyword>
<keyword id="KW-0479">Metal-binding</keyword>
<keyword id="KW-0949">S-adenosyl-L-methionine</keyword>
<keyword id="KW-0808">Transferase</keyword>
<keyword id="KW-0819">tRNA processing</keyword>
<gene>
    <name evidence="1" type="primary">miaB</name>
    <name type="ordered locus">syc1731_c</name>
</gene>
<sequence length="452" mass="50656">MSTPRRYHITTFGCQMNKADSERMAGILEDLGYIWSEEANDADLVLYNTCTIRDNAEQKVYSYLGRQAERKRQQPDLTLIVAGCVAQQEGESLLRRVPELDLVMGPQHANRLADLLAQVEAGSQVVATEEVEIAEDITQPRRDSTITAWVNVIYGCNERCTYCVVPNVRGREQSREPAAIRAEIEQLAAQGYREITLLGQNIDAYGRDLPGSTPEGRHLHTLTDLLYTIHDVPGIERIRFATSHPRYFTERLIRACAELPKVCEYFHIPFQSGDNDVLKAMARGYTVERYLRIVEQIRDIIPDAAISADAIVAFPGETEEQFENTLKLVEQVGFDLVNTAAYSPRPGTPAANAPNQLSEEVKQDRLQRLNHLVAQMAADRSQRYLGRTEEVLIEATNPRNPQQVMGRTRTNRLVFCDGTIAQLEGQLVPVRITETRAFSLTGQILSPVAAGC</sequence>
<name>MIAB_SYNP6</name>
<protein>
    <recommendedName>
        <fullName evidence="1">tRNA-2-methylthio-N(6)-dimethylallyladenosine synthase</fullName>
        <ecNumber evidence="1">2.8.4.3</ecNumber>
    </recommendedName>
    <alternativeName>
        <fullName evidence="1">(Dimethylallyl)adenosine tRNA methylthiotransferase MiaB</fullName>
    </alternativeName>
    <alternativeName>
        <fullName evidence="1">tRNA-i(6)A37 methylthiotransferase</fullName>
    </alternativeName>
</protein>
<proteinExistence type="inferred from homology"/>
<organism>
    <name type="scientific">Synechococcus sp. (strain ATCC 27144 / PCC 6301 / SAUG 1402/1)</name>
    <name type="common">Anacystis nidulans</name>
    <dbReference type="NCBI Taxonomy" id="269084"/>
    <lineage>
        <taxon>Bacteria</taxon>
        <taxon>Bacillati</taxon>
        <taxon>Cyanobacteriota</taxon>
        <taxon>Cyanophyceae</taxon>
        <taxon>Synechococcales</taxon>
        <taxon>Synechococcaceae</taxon>
        <taxon>Synechococcus</taxon>
    </lineage>
</organism>
<dbReference type="EC" id="2.8.4.3" evidence="1"/>
<dbReference type="EMBL" id="AP008231">
    <property type="protein sequence ID" value="BAD79921.1"/>
    <property type="molecule type" value="Genomic_DNA"/>
</dbReference>
<dbReference type="RefSeq" id="WP_011244041.1">
    <property type="nucleotide sequence ID" value="NZ_CP085785.1"/>
</dbReference>
<dbReference type="SMR" id="Q5N199"/>
<dbReference type="GeneID" id="72431262"/>
<dbReference type="KEGG" id="syc:syc1731_c"/>
<dbReference type="eggNOG" id="COG0621">
    <property type="taxonomic scope" value="Bacteria"/>
</dbReference>
<dbReference type="Proteomes" id="UP000001175">
    <property type="component" value="Chromosome"/>
</dbReference>
<dbReference type="GO" id="GO:0005737">
    <property type="term" value="C:cytoplasm"/>
    <property type="evidence" value="ECO:0007669"/>
    <property type="project" value="UniProtKB-SubCell"/>
</dbReference>
<dbReference type="GO" id="GO:0051539">
    <property type="term" value="F:4 iron, 4 sulfur cluster binding"/>
    <property type="evidence" value="ECO:0007669"/>
    <property type="project" value="UniProtKB-UniRule"/>
</dbReference>
<dbReference type="GO" id="GO:0046872">
    <property type="term" value="F:metal ion binding"/>
    <property type="evidence" value="ECO:0007669"/>
    <property type="project" value="UniProtKB-KW"/>
</dbReference>
<dbReference type="GO" id="GO:0035596">
    <property type="term" value="F:methylthiotransferase activity"/>
    <property type="evidence" value="ECO:0007669"/>
    <property type="project" value="InterPro"/>
</dbReference>
<dbReference type="GO" id="GO:0035600">
    <property type="term" value="P:tRNA methylthiolation"/>
    <property type="evidence" value="ECO:0007669"/>
    <property type="project" value="TreeGrafter"/>
</dbReference>
<dbReference type="CDD" id="cd01335">
    <property type="entry name" value="Radical_SAM"/>
    <property type="match status" value="1"/>
</dbReference>
<dbReference type="FunFam" id="3.40.50.12160:FF:000006">
    <property type="entry name" value="tRNA-2-methylthio-N(6)-dimethylallyladenosine synthase"/>
    <property type="match status" value="1"/>
</dbReference>
<dbReference type="FunFam" id="3.80.30.20:FF:000001">
    <property type="entry name" value="tRNA-2-methylthio-N(6)-dimethylallyladenosine synthase 2"/>
    <property type="match status" value="1"/>
</dbReference>
<dbReference type="Gene3D" id="3.40.50.12160">
    <property type="entry name" value="Methylthiotransferase, N-terminal domain"/>
    <property type="match status" value="1"/>
</dbReference>
<dbReference type="Gene3D" id="3.80.30.20">
    <property type="entry name" value="tm_1862 like domain"/>
    <property type="match status" value="1"/>
</dbReference>
<dbReference type="HAMAP" id="MF_01864">
    <property type="entry name" value="tRNA_metthiotr_MiaB"/>
    <property type="match status" value="1"/>
</dbReference>
<dbReference type="InterPro" id="IPR006638">
    <property type="entry name" value="Elp3/MiaA/NifB-like_rSAM"/>
</dbReference>
<dbReference type="InterPro" id="IPR005839">
    <property type="entry name" value="Methylthiotransferase"/>
</dbReference>
<dbReference type="InterPro" id="IPR020612">
    <property type="entry name" value="Methylthiotransferase_CS"/>
</dbReference>
<dbReference type="InterPro" id="IPR013848">
    <property type="entry name" value="Methylthiotransferase_N"/>
</dbReference>
<dbReference type="InterPro" id="IPR038135">
    <property type="entry name" value="Methylthiotransferase_N_sf"/>
</dbReference>
<dbReference type="InterPro" id="IPR006463">
    <property type="entry name" value="MiaB_methiolase"/>
</dbReference>
<dbReference type="InterPro" id="IPR007197">
    <property type="entry name" value="rSAM"/>
</dbReference>
<dbReference type="InterPro" id="IPR023404">
    <property type="entry name" value="rSAM_horseshoe"/>
</dbReference>
<dbReference type="InterPro" id="IPR002792">
    <property type="entry name" value="TRAM_dom"/>
</dbReference>
<dbReference type="NCBIfam" id="TIGR01574">
    <property type="entry name" value="miaB-methiolase"/>
    <property type="match status" value="1"/>
</dbReference>
<dbReference type="NCBIfam" id="TIGR00089">
    <property type="entry name" value="MiaB/RimO family radical SAM methylthiotransferase"/>
    <property type="match status" value="1"/>
</dbReference>
<dbReference type="PANTHER" id="PTHR43020">
    <property type="entry name" value="CDK5 REGULATORY SUBUNIT-ASSOCIATED PROTEIN 1"/>
    <property type="match status" value="1"/>
</dbReference>
<dbReference type="PANTHER" id="PTHR43020:SF2">
    <property type="entry name" value="MITOCHONDRIAL TRNA METHYLTHIOTRANSFERASE CDK5RAP1"/>
    <property type="match status" value="1"/>
</dbReference>
<dbReference type="Pfam" id="PF04055">
    <property type="entry name" value="Radical_SAM"/>
    <property type="match status" value="1"/>
</dbReference>
<dbReference type="Pfam" id="PF01938">
    <property type="entry name" value="TRAM"/>
    <property type="match status" value="1"/>
</dbReference>
<dbReference type="Pfam" id="PF00919">
    <property type="entry name" value="UPF0004"/>
    <property type="match status" value="1"/>
</dbReference>
<dbReference type="SFLD" id="SFLDF00273">
    <property type="entry name" value="(dimethylallyl)adenosine_tRNA"/>
    <property type="match status" value="1"/>
</dbReference>
<dbReference type="SFLD" id="SFLDG01082">
    <property type="entry name" value="B12-binding_domain_containing"/>
    <property type="match status" value="1"/>
</dbReference>
<dbReference type="SFLD" id="SFLDS00029">
    <property type="entry name" value="Radical_SAM"/>
    <property type="match status" value="1"/>
</dbReference>
<dbReference type="SMART" id="SM00729">
    <property type="entry name" value="Elp3"/>
    <property type="match status" value="1"/>
</dbReference>
<dbReference type="SUPFAM" id="SSF102114">
    <property type="entry name" value="Radical SAM enzymes"/>
    <property type="match status" value="1"/>
</dbReference>
<dbReference type="PROSITE" id="PS51449">
    <property type="entry name" value="MTTASE_N"/>
    <property type="match status" value="1"/>
</dbReference>
<dbReference type="PROSITE" id="PS01278">
    <property type="entry name" value="MTTASE_RADICAL"/>
    <property type="match status" value="1"/>
</dbReference>
<dbReference type="PROSITE" id="PS51918">
    <property type="entry name" value="RADICAL_SAM"/>
    <property type="match status" value="1"/>
</dbReference>
<dbReference type="PROSITE" id="PS50926">
    <property type="entry name" value="TRAM"/>
    <property type="match status" value="1"/>
</dbReference>
<reference key="1">
    <citation type="journal article" date="2007" name="Photosyn. Res.">
        <title>Complete nucleotide sequence of the freshwater unicellular cyanobacterium Synechococcus elongatus PCC 6301 chromosome: gene content and organization.</title>
        <authorList>
            <person name="Sugita C."/>
            <person name="Ogata K."/>
            <person name="Shikata M."/>
            <person name="Jikuya H."/>
            <person name="Takano J."/>
            <person name="Furumichi M."/>
            <person name="Kanehisa M."/>
            <person name="Omata T."/>
            <person name="Sugiura M."/>
            <person name="Sugita M."/>
        </authorList>
    </citation>
    <scope>NUCLEOTIDE SEQUENCE [LARGE SCALE GENOMIC DNA]</scope>
    <source>
        <strain>ATCC 27144 / PCC 6301 / SAUG 1402/1</strain>
    </source>
</reference>
<accession>Q5N199</accession>
<feature type="chain" id="PRO_0000374593" description="tRNA-2-methylthio-N(6)-dimethylallyladenosine synthase">
    <location>
        <begin position="1"/>
        <end position="452"/>
    </location>
</feature>
<feature type="domain" description="MTTase N-terminal" evidence="1">
    <location>
        <begin position="5"/>
        <end position="121"/>
    </location>
</feature>
<feature type="domain" description="Radical SAM core" evidence="2">
    <location>
        <begin position="142"/>
        <end position="379"/>
    </location>
</feature>
<feature type="domain" description="TRAM" evidence="1">
    <location>
        <begin position="382"/>
        <end position="446"/>
    </location>
</feature>
<feature type="binding site" evidence="1">
    <location>
        <position position="14"/>
    </location>
    <ligand>
        <name>[4Fe-4S] cluster</name>
        <dbReference type="ChEBI" id="CHEBI:49883"/>
        <label>1</label>
    </ligand>
</feature>
<feature type="binding site" evidence="1">
    <location>
        <position position="50"/>
    </location>
    <ligand>
        <name>[4Fe-4S] cluster</name>
        <dbReference type="ChEBI" id="CHEBI:49883"/>
        <label>1</label>
    </ligand>
</feature>
<feature type="binding site" evidence="1">
    <location>
        <position position="84"/>
    </location>
    <ligand>
        <name>[4Fe-4S] cluster</name>
        <dbReference type="ChEBI" id="CHEBI:49883"/>
        <label>1</label>
    </ligand>
</feature>
<feature type="binding site" evidence="1">
    <location>
        <position position="156"/>
    </location>
    <ligand>
        <name>[4Fe-4S] cluster</name>
        <dbReference type="ChEBI" id="CHEBI:49883"/>
        <label>2</label>
        <note>4Fe-4S-S-AdoMet</note>
    </ligand>
</feature>
<feature type="binding site" evidence="1">
    <location>
        <position position="160"/>
    </location>
    <ligand>
        <name>[4Fe-4S] cluster</name>
        <dbReference type="ChEBI" id="CHEBI:49883"/>
        <label>2</label>
        <note>4Fe-4S-S-AdoMet</note>
    </ligand>
</feature>
<feature type="binding site" evidence="1">
    <location>
        <position position="163"/>
    </location>
    <ligand>
        <name>[4Fe-4S] cluster</name>
        <dbReference type="ChEBI" id="CHEBI:49883"/>
        <label>2</label>
        <note>4Fe-4S-S-AdoMet</note>
    </ligand>
</feature>